<name>PSBT_THEVL</name>
<accession>P12313</accession>
<sequence length="32" mass="3875">METITYVFIFACIIALFFFAIFFREPPRITKK</sequence>
<keyword id="KW-0002">3D-structure</keyword>
<keyword id="KW-0903">Direct protein sequencing</keyword>
<keyword id="KW-0472">Membrane</keyword>
<keyword id="KW-0602">Photosynthesis</keyword>
<keyword id="KW-0604">Photosystem II</keyword>
<keyword id="KW-0793">Thylakoid</keyword>
<keyword id="KW-0812">Transmembrane</keyword>
<keyword id="KW-1133">Transmembrane helix</keyword>
<feature type="chain" id="PRO_0000207975" description="Photosystem II reaction center protein T">
    <location>
        <begin position="1"/>
        <end position="32"/>
    </location>
</feature>
<feature type="topological domain" description="Lumenal" evidence="4">
    <location>
        <begin position="1"/>
        <end position="7"/>
    </location>
</feature>
<feature type="transmembrane region" description="Helical" evidence="4">
    <location>
        <begin position="8"/>
        <end position="23"/>
    </location>
</feature>
<feature type="topological domain" description="Cytoplasmic" evidence="4">
    <location>
        <begin position="24"/>
        <end position="32"/>
    </location>
</feature>
<feature type="modified residue" description="Blocked amino end (Met)" evidence="6">
    <location>
        <position position="1"/>
    </location>
</feature>
<feature type="sequence conflict" description="In Ref. 2; AA sequence." evidence="7" ref="2">
    <original>F</original>
    <variation>T</variation>
    <location>
        <position position="19"/>
    </location>
</feature>
<feature type="helix" evidence="9">
    <location>
        <begin position="2"/>
        <end position="22"/>
    </location>
</feature>
<evidence type="ECO:0000255" key="1">
    <source>
        <dbReference type="HAMAP-Rule" id="MF_00808"/>
    </source>
</evidence>
<evidence type="ECO:0000269" key="2">
    <source>
    </source>
</evidence>
<evidence type="ECO:0000269" key="3">
    <source>
    </source>
</evidence>
<evidence type="ECO:0000269" key="4">
    <source>
    </source>
</evidence>
<evidence type="ECO:0000269" key="5">
    <source>
    </source>
</evidence>
<evidence type="ECO:0000269" key="6">
    <source>
    </source>
</evidence>
<evidence type="ECO:0000305" key="7"/>
<evidence type="ECO:0000305" key="8">
    <source>
    </source>
</evidence>
<evidence type="ECO:0007829" key="9">
    <source>
        <dbReference type="PDB" id="5B66"/>
    </source>
</evidence>
<organism>
    <name type="scientific">Thermostichus vulcanus</name>
    <name type="common">Synechococcus vulcanus</name>
    <dbReference type="NCBI Taxonomy" id="32053"/>
    <lineage>
        <taxon>Bacteria</taxon>
        <taxon>Bacillati</taxon>
        <taxon>Cyanobacteriota</taxon>
        <taxon>Cyanophyceae</taxon>
        <taxon>Thermostichales</taxon>
        <taxon>Thermostichaceae</taxon>
        <taxon>Thermostichus</taxon>
    </lineage>
</organism>
<protein>
    <recommendedName>
        <fullName evidence="1">Photosystem II reaction center protein T</fullName>
        <shortName evidence="1">PSII-T</shortName>
    </recommendedName>
</protein>
<proteinExistence type="evidence at protein level"/>
<dbReference type="PIR" id="S05216">
    <property type="entry name" value="S05216"/>
</dbReference>
<dbReference type="PDB" id="3A0B">
    <property type="method" value="X-ray"/>
    <property type="resolution" value="3.70 A"/>
    <property type="chains" value="T/t=1-30"/>
</dbReference>
<dbReference type="PDB" id="3A0H">
    <property type="method" value="X-ray"/>
    <property type="resolution" value="4.00 A"/>
    <property type="chains" value="T/t=1-30"/>
</dbReference>
<dbReference type="PDB" id="3WU2">
    <property type="method" value="X-ray"/>
    <property type="resolution" value="1.90 A"/>
    <property type="chains" value="T/t=1-32"/>
</dbReference>
<dbReference type="PDB" id="4IL6">
    <property type="method" value="X-ray"/>
    <property type="resolution" value="2.10 A"/>
    <property type="chains" value="T/t=1-31"/>
</dbReference>
<dbReference type="PDB" id="4UB6">
    <property type="method" value="X-ray"/>
    <property type="resolution" value="1.95 A"/>
    <property type="chains" value="T/t=1-31"/>
</dbReference>
<dbReference type="PDB" id="4UB8">
    <property type="method" value="X-ray"/>
    <property type="resolution" value="1.95 A"/>
    <property type="chains" value="T/t=1-31"/>
</dbReference>
<dbReference type="PDB" id="5B5E">
    <property type="method" value="X-ray"/>
    <property type="resolution" value="1.87 A"/>
    <property type="chains" value="T/t=1-32"/>
</dbReference>
<dbReference type="PDB" id="5B66">
    <property type="method" value="X-ray"/>
    <property type="resolution" value="1.85 A"/>
    <property type="chains" value="T/t=1-32"/>
</dbReference>
<dbReference type="PDB" id="5GTH">
    <property type="method" value="X-ray"/>
    <property type="resolution" value="2.50 A"/>
    <property type="chains" value="T/t=1-32"/>
</dbReference>
<dbReference type="PDB" id="5GTI">
    <property type="method" value="X-ray"/>
    <property type="resolution" value="2.50 A"/>
    <property type="chains" value="T/t=1-32"/>
</dbReference>
<dbReference type="PDB" id="5V2C">
    <property type="method" value="X-ray"/>
    <property type="resolution" value="1.90 A"/>
    <property type="chains" value="T/t=1-32"/>
</dbReference>
<dbReference type="PDB" id="5WS5">
    <property type="method" value="X-ray"/>
    <property type="resolution" value="2.35 A"/>
    <property type="chains" value="T/t=1-32"/>
</dbReference>
<dbReference type="PDB" id="5WS6">
    <property type="method" value="X-ray"/>
    <property type="resolution" value="2.35 A"/>
    <property type="chains" value="T/t=1-32"/>
</dbReference>
<dbReference type="PDB" id="6JLJ">
    <property type="method" value="X-ray"/>
    <property type="resolution" value="2.15 A"/>
    <property type="chains" value="T/t=1-32"/>
</dbReference>
<dbReference type="PDB" id="6JLK">
    <property type="method" value="X-ray"/>
    <property type="resolution" value="2.15 A"/>
    <property type="chains" value="T/t=1-32"/>
</dbReference>
<dbReference type="PDB" id="6JLL">
    <property type="method" value="X-ray"/>
    <property type="resolution" value="2.15 A"/>
    <property type="chains" value="T/t=1-32"/>
</dbReference>
<dbReference type="PDB" id="6JLM">
    <property type="method" value="X-ray"/>
    <property type="resolution" value="2.35 A"/>
    <property type="chains" value="T/t=1-32"/>
</dbReference>
<dbReference type="PDB" id="6JLN">
    <property type="method" value="X-ray"/>
    <property type="resolution" value="2.40 A"/>
    <property type="chains" value="T/t=1-32"/>
</dbReference>
<dbReference type="PDB" id="6JLO">
    <property type="method" value="X-ray"/>
    <property type="resolution" value="2.40 A"/>
    <property type="chains" value="T/t=1-32"/>
</dbReference>
<dbReference type="PDB" id="6JLP">
    <property type="method" value="X-ray"/>
    <property type="resolution" value="2.50 A"/>
    <property type="chains" value="T/t=1-32"/>
</dbReference>
<dbReference type="PDB" id="7CJI">
    <property type="method" value="X-ray"/>
    <property type="resolution" value="2.35 A"/>
    <property type="chains" value="T/t=1-32"/>
</dbReference>
<dbReference type="PDB" id="7CJJ">
    <property type="method" value="X-ray"/>
    <property type="resolution" value="2.40 A"/>
    <property type="chains" value="T/t=1-32"/>
</dbReference>
<dbReference type="PDB" id="7COU">
    <property type="method" value="X-ray"/>
    <property type="resolution" value="2.25 A"/>
    <property type="chains" value="T/t=1-32"/>
</dbReference>
<dbReference type="PDB" id="7CZL">
    <property type="method" value="EM"/>
    <property type="resolution" value="3.78 A"/>
    <property type="chains" value="T/t=1-30"/>
</dbReference>
<dbReference type="PDB" id="7D1T">
    <property type="method" value="EM"/>
    <property type="resolution" value="1.95 A"/>
    <property type="chains" value="T/t=1-31"/>
</dbReference>
<dbReference type="PDB" id="7D1U">
    <property type="method" value="EM"/>
    <property type="resolution" value="2.08 A"/>
    <property type="chains" value="T/t=1-31"/>
</dbReference>
<dbReference type="PDB" id="7DXA">
    <property type="method" value="EM"/>
    <property type="resolution" value="3.14 A"/>
    <property type="chains" value="t=1-32"/>
</dbReference>
<dbReference type="PDB" id="7DXH">
    <property type="method" value="EM"/>
    <property type="resolution" value="3.14 A"/>
    <property type="chains" value="t=1-32"/>
</dbReference>
<dbReference type="PDB" id="7EDA">
    <property type="method" value="EM"/>
    <property type="resolution" value="2.78 A"/>
    <property type="chains" value="T=1-30"/>
</dbReference>
<dbReference type="PDB" id="8GN0">
    <property type="method" value="X-ray"/>
    <property type="resolution" value="2.15 A"/>
    <property type="chains" value="T/t=1-32"/>
</dbReference>
<dbReference type="PDB" id="8GN1">
    <property type="method" value="X-ray"/>
    <property type="resolution" value="2.10 A"/>
    <property type="chains" value="T/t=1-32"/>
</dbReference>
<dbReference type="PDB" id="8GN2">
    <property type="method" value="X-ray"/>
    <property type="resolution" value="1.95 A"/>
    <property type="chains" value="T/t=1-32"/>
</dbReference>
<dbReference type="PDB" id="8IR5">
    <property type="method" value="X-ray"/>
    <property type="resolution" value="2.15 A"/>
    <property type="chains" value="T/t=1-32"/>
</dbReference>
<dbReference type="PDB" id="8IR6">
    <property type="method" value="X-ray"/>
    <property type="resolution" value="2.20 A"/>
    <property type="chains" value="T/t=1-32"/>
</dbReference>
<dbReference type="PDB" id="8IR7">
    <property type="method" value="X-ray"/>
    <property type="resolution" value="2.25 A"/>
    <property type="chains" value="T/t=1-32"/>
</dbReference>
<dbReference type="PDB" id="8IR8">
    <property type="method" value="X-ray"/>
    <property type="resolution" value="2.25 A"/>
    <property type="chains" value="T/t=1-32"/>
</dbReference>
<dbReference type="PDB" id="8IR9">
    <property type="method" value="X-ray"/>
    <property type="resolution" value="2.20 A"/>
    <property type="chains" value="T/t=1-32"/>
</dbReference>
<dbReference type="PDB" id="8IRA">
    <property type="method" value="X-ray"/>
    <property type="resolution" value="2.20 A"/>
    <property type="chains" value="T/t=1-32"/>
</dbReference>
<dbReference type="PDB" id="8IRB">
    <property type="method" value="X-ray"/>
    <property type="resolution" value="2.30 A"/>
    <property type="chains" value="T/t=1-32"/>
</dbReference>
<dbReference type="PDB" id="8IRC">
    <property type="method" value="X-ray"/>
    <property type="resolution" value="2.25 A"/>
    <property type="chains" value="T/t=1-32"/>
</dbReference>
<dbReference type="PDB" id="8IRD">
    <property type="method" value="X-ray"/>
    <property type="resolution" value="2.30 A"/>
    <property type="chains" value="T/t=1-32"/>
</dbReference>
<dbReference type="PDB" id="8IRE">
    <property type="method" value="X-ray"/>
    <property type="resolution" value="2.25 A"/>
    <property type="chains" value="T/t=1-32"/>
</dbReference>
<dbReference type="PDB" id="8IRF">
    <property type="method" value="X-ray"/>
    <property type="resolution" value="2.25 A"/>
    <property type="chains" value="T/t=1-32"/>
</dbReference>
<dbReference type="PDB" id="8IRG">
    <property type="method" value="X-ray"/>
    <property type="resolution" value="2.30 A"/>
    <property type="chains" value="T/t=1-32"/>
</dbReference>
<dbReference type="PDB" id="8IRH">
    <property type="method" value="X-ray"/>
    <property type="resolution" value="2.25 A"/>
    <property type="chains" value="T/t=1-32"/>
</dbReference>
<dbReference type="PDB" id="8IRI">
    <property type="method" value="X-ray"/>
    <property type="resolution" value="2.25 A"/>
    <property type="chains" value="T/t=1-32"/>
</dbReference>
<dbReference type="PDBsum" id="3A0B"/>
<dbReference type="PDBsum" id="3A0H"/>
<dbReference type="PDBsum" id="3WU2"/>
<dbReference type="PDBsum" id="4IL6"/>
<dbReference type="PDBsum" id="4UB6"/>
<dbReference type="PDBsum" id="4UB8"/>
<dbReference type="PDBsum" id="5B5E"/>
<dbReference type="PDBsum" id="5B66"/>
<dbReference type="PDBsum" id="5GTH"/>
<dbReference type="PDBsum" id="5GTI"/>
<dbReference type="PDBsum" id="5V2C"/>
<dbReference type="PDBsum" id="5WS5"/>
<dbReference type="PDBsum" id="5WS6"/>
<dbReference type="PDBsum" id="6JLJ"/>
<dbReference type="PDBsum" id="6JLK"/>
<dbReference type="PDBsum" id="6JLL"/>
<dbReference type="PDBsum" id="6JLM"/>
<dbReference type="PDBsum" id="6JLN"/>
<dbReference type="PDBsum" id="6JLO"/>
<dbReference type="PDBsum" id="6JLP"/>
<dbReference type="PDBsum" id="7CJI"/>
<dbReference type="PDBsum" id="7CJJ"/>
<dbReference type="PDBsum" id="7COU"/>
<dbReference type="PDBsum" id="7CZL"/>
<dbReference type="PDBsum" id="7D1T"/>
<dbReference type="PDBsum" id="7D1U"/>
<dbReference type="PDBsum" id="7DXA"/>
<dbReference type="PDBsum" id="7DXH"/>
<dbReference type="PDBsum" id="7EDA"/>
<dbReference type="PDBsum" id="8GN0"/>
<dbReference type="PDBsum" id="8GN1"/>
<dbReference type="PDBsum" id="8GN2"/>
<dbReference type="PDBsum" id="8IR5"/>
<dbReference type="PDBsum" id="8IR6"/>
<dbReference type="PDBsum" id="8IR7"/>
<dbReference type="PDBsum" id="8IR8"/>
<dbReference type="PDBsum" id="8IR9"/>
<dbReference type="PDBsum" id="8IRA"/>
<dbReference type="PDBsum" id="8IRB"/>
<dbReference type="PDBsum" id="8IRC"/>
<dbReference type="PDBsum" id="8IRD"/>
<dbReference type="PDBsum" id="8IRE"/>
<dbReference type="PDBsum" id="8IRF"/>
<dbReference type="PDBsum" id="8IRG"/>
<dbReference type="PDBsum" id="8IRH"/>
<dbReference type="PDBsum" id="8IRI"/>
<dbReference type="EMDB" id="EMD-30511"/>
<dbReference type="EMDB" id="EMD-30547"/>
<dbReference type="EMDB" id="EMD-30548"/>
<dbReference type="EMDB" id="EMD-30902"/>
<dbReference type="EMDB" id="EMD-30909"/>
<dbReference type="EMDB" id="EMD-31062"/>
<dbReference type="SMR" id="P12313"/>
<dbReference type="DIP" id="DIP-48869N"/>
<dbReference type="IntAct" id="P12313">
    <property type="interactions" value="1"/>
</dbReference>
<dbReference type="GO" id="GO:0009539">
    <property type="term" value="C:photosystem II reaction center"/>
    <property type="evidence" value="ECO:0007669"/>
    <property type="project" value="InterPro"/>
</dbReference>
<dbReference type="GO" id="GO:0031676">
    <property type="term" value="C:plasma membrane-derived thylakoid membrane"/>
    <property type="evidence" value="ECO:0007669"/>
    <property type="project" value="UniProtKB-SubCell"/>
</dbReference>
<dbReference type="GO" id="GO:0015979">
    <property type="term" value="P:photosynthesis"/>
    <property type="evidence" value="ECO:0007669"/>
    <property type="project" value="UniProtKB-UniRule"/>
</dbReference>
<dbReference type="HAMAP" id="MF_00808">
    <property type="entry name" value="PSII_PsbT"/>
    <property type="match status" value="1"/>
</dbReference>
<dbReference type="InterPro" id="IPR001743">
    <property type="entry name" value="PSII_PsbT"/>
</dbReference>
<dbReference type="InterPro" id="IPR037268">
    <property type="entry name" value="PSII_PsbT_sf"/>
</dbReference>
<dbReference type="Pfam" id="PF01405">
    <property type="entry name" value="PsbT"/>
    <property type="match status" value="1"/>
</dbReference>
<dbReference type="SUPFAM" id="SSF161029">
    <property type="entry name" value="Photosystem II reaction center protein T, PsbT"/>
    <property type="match status" value="1"/>
</dbReference>
<reference key="1">
    <citation type="journal article" date="2002" name="Plant Cell Physiol.">
        <title>Low-molecular-mass polypeptide components of a photosystem II preparation from the thermophilic cyanobacterium Thermosynechococcus vulcanus.</title>
        <authorList>
            <person name="Kashino Y."/>
            <person name="Koike H."/>
            <person name="Yoshio M."/>
            <person name="Egashira H."/>
            <person name="Ikeuchi M."/>
            <person name="Pakrasi H.B."/>
            <person name="Satoh K."/>
        </authorList>
    </citation>
    <scope>PROTEIN SEQUENCE</scope>
    <scope>IDENTIFICATION</scope>
    <scope>COMPOSITION OF PHOTOSYSTEM II</scope>
    <scope>SUBUNIT</scope>
</reference>
<reference key="2">
    <citation type="journal article" date="1989" name="FEBS Lett.">
        <title>N-terminal sequencing of low-molecular-mass components in cyanobacterial photosystem II core complex. Two components correspond to unidentified open reading frames of plant chloroplast DNA.</title>
        <authorList>
            <person name="Ikeuchi M."/>
            <person name="Koike H."/>
            <person name="Inoue Y."/>
        </authorList>
    </citation>
    <scope>PROTEIN SEQUENCE OF 1-19</scope>
</reference>
<reference key="3">
    <citation type="journal article" date="2009" name="Proc. Natl. Acad. Sci. U.S.A.">
        <title>Location of chloride and its possible functions in oxygen-evolving photosystem II revealed by X-ray crystallography.</title>
        <authorList>
            <person name="Kawakami K."/>
            <person name="Umena Y."/>
            <person name="Kamiya N."/>
            <person name="Shen J.R."/>
        </authorList>
    </citation>
    <scope>X-RAY CRYSTALLOGRAPHY (3.7 ANGSTROMS) OF 1-30 IN PHOTOSYSTEM II</scope>
    <scope>FUNCTION</scope>
    <scope>COFACTOR</scope>
    <scope>SUBUNIT</scope>
    <scope>SUBCELLULAR LOCATION</scope>
</reference>
<reference key="4">
    <citation type="journal article" date="2011" name="Nature">
        <title>Crystal structure of oxygen-evolving photosystem II at a resolution of 1.9 A.</title>
        <authorList>
            <person name="Umena Y."/>
            <person name="Kawakami K."/>
            <person name="Shen J.R."/>
            <person name="Kamiya N."/>
        </authorList>
    </citation>
    <scope>X-RAY CRYSTALLOGRAPHY (1.9 ANGSTROMS) IN PHOTOSYSTEM II</scope>
    <scope>COFACTOR</scope>
    <scope>SUBUNIT</scope>
    <scope>SUBCELLULAR LOCATION</scope>
    <scope>TOPOLOGY</scope>
</reference>
<reference key="5">
    <citation type="journal article" date="2013" name="Proc. Natl. Acad. Sci. U.S.A.">
        <title>Structure of Sr-substituted photosystem II at 2.1 A resolution and its implications in the mechanism of water oxidation.</title>
        <authorList>
            <person name="Koua F.H."/>
            <person name="Umena Y."/>
            <person name="Kawakami K."/>
            <person name="Shen J.R."/>
        </authorList>
    </citation>
    <scope>X-RAY CRYSTALLOGRAPHY (2.1 ANGSTROMS) OF 1-31 IN PHOTOSYSTEM II</scope>
    <scope>FUNCTION</scope>
    <scope>COFACTOR</scope>
    <scope>SUBUNIT</scope>
    <scope>SUBCELLULAR LOCATION</scope>
</reference>
<gene>
    <name evidence="1" type="primary">psbT</name>
</gene>
<comment type="function">
    <text evidence="3 5">Seems to play a role in the dimerization of photosystem II (PSII). PSII is a light-driven water plastoquinone oxidoreductase, using light energy to abstract electrons from H(2)O, generating a proton gradient subsequently used for ATP formation.</text>
</comment>
<comment type="function">
    <text evidence="1">Found at the monomer-monomer interface of the photosystem II (PS II) dimer, plays a role in assembly and dimerization of PSII. PSII is a light-driven water plastoquinone oxidoreductase, using light energy to abstract electrons from H(2)O, generating a proton gradient subsequently used for ATP formation.</text>
</comment>
<comment type="cofactor">
    <text evidence="3 4 5">PSII binds multiple chlorophylls, carotenoids and specific lipids.</text>
</comment>
<comment type="subunit">
    <text evidence="1 2 3 4 5">PSII is composed of 1 copy each of membrane proteins PsbA, PsbB, PsbC, PsbD, PsbE, PsbF, PsbH, PsbI, PsbJ, PsbK, PsbL, PsbM, PsbT, PsbX, PsbY, PsbZ, Psb30/Ycf12, peripheral proteins PsbO, CyanoQ (PsbQ), PsbU, PsbV and a large number of cofactors. It forms dimeric complexes.</text>
</comment>
<comment type="subcellular location">
    <subcellularLocation>
        <location evidence="1 3 4 5">Cellular thylakoid membrane</location>
        <topology evidence="1 3 4 5">Single-pass membrane protein</topology>
    </subcellularLocation>
</comment>
<comment type="similarity">
    <text evidence="1 7">Belongs to the PsbT family.</text>
</comment>
<comment type="caution">
    <text evidence="8">Was originally thought to be PsbN.</text>
</comment>